<accession>B8ZN58</accession>
<organism>
    <name type="scientific">Streptococcus pneumoniae (strain ATCC 700669 / Spain 23F-1)</name>
    <dbReference type="NCBI Taxonomy" id="561276"/>
    <lineage>
        <taxon>Bacteria</taxon>
        <taxon>Bacillati</taxon>
        <taxon>Bacillota</taxon>
        <taxon>Bacilli</taxon>
        <taxon>Lactobacillales</taxon>
        <taxon>Streptococcaceae</taxon>
        <taxon>Streptococcus</taxon>
    </lineage>
</organism>
<feature type="chain" id="PRO_1000198726" description="Tryptophan synthase alpha chain">
    <location>
        <begin position="1"/>
        <end position="258"/>
    </location>
</feature>
<feature type="active site" description="Proton acceptor" evidence="1">
    <location>
        <position position="52"/>
    </location>
</feature>
<feature type="active site" description="Proton acceptor" evidence="1">
    <location>
        <position position="63"/>
    </location>
</feature>
<gene>
    <name evidence="1" type="primary">trpA</name>
    <name type="ordered locus">SPN23F18310</name>
</gene>
<reference key="1">
    <citation type="journal article" date="2009" name="J. Bacteriol.">
        <title>Role of conjugative elements in the evolution of the multidrug-resistant pandemic clone Streptococcus pneumoniae Spain23F ST81.</title>
        <authorList>
            <person name="Croucher N.J."/>
            <person name="Walker D."/>
            <person name="Romero P."/>
            <person name="Lennard N."/>
            <person name="Paterson G.K."/>
            <person name="Bason N.C."/>
            <person name="Mitchell A.M."/>
            <person name="Quail M.A."/>
            <person name="Andrew P.W."/>
            <person name="Parkhill J."/>
            <person name="Bentley S.D."/>
            <person name="Mitchell T.J."/>
        </authorList>
    </citation>
    <scope>NUCLEOTIDE SEQUENCE [LARGE SCALE GENOMIC DNA]</scope>
    <source>
        <strain>ATCC 700669 / Spain 23F-1</strain>
    </source>
</reference>
<sequence length="258" mass="27712">MPKTLTEKLNAIKAAGKGIFVPYIMAGDHEKGLDGLAETIHFLEDLGVSAIEVGIPFSDPVADGPVIEEAGLRSLAHGTSTQALVETLKTIETEIPLVIMTYFNPLFQYGVENFVKDLADTAVKGLIIPDLPHEHANFVEPFLADTDIALIPLVSLTTGIERQKELIEGAEGFIYAVAINGVTGKSGNYRADLDKHLAQLHQVADIPVLTGFGVSSQADLERFNAVSDGVIVGSKIVKALHQGEPIQDFIKQAVAYQK</sequence>
<comment type="function">
    <text evidence="1">The alpha subunit is responsible for the aldol cleavage of indoleglycerol phosphate to indole and glyceraldehyde 3-phosphate.</text>
</comment>
<comment type="catalytic activity">
    <reaction evidence="1">
        <text>(1S,2R)-1-C-(indol-3-yl)glycerol 3-phosphate + L-serine = D-glyceraldehyde 3-phosphate + L-tryptophan + H2O</text>
        <dbReference type="Rhea" id="RHEA:10532"/>
        <dbReference type="ChEBI" id="CHEBI:15377"/>
        <dbReference type="ChEBI" id="CHEBI:33384"/>
        <dbReference type="ChEBI" id="CHEBI:57912"/>
        <dbReference type="ChEBI" id="CHEBI:58866"/>
        <dbReference type="ChEBI" id="CHEBI:59776"/>
        <dbReference type="EC" id="4.2.1.20"/>
    </reaction>
</comment>
<comment type="pathway">
    <text evidence="1">Amino-acid biosynthesis; L-tryptophan biosynthesis; L-tryptophan from chorismate: step 5/5.</text>
</comment>
<comment type="subunit">
    <text evidence="1">Tetramer of two alpha and two beta chains.</text>
</comment>
<comment type="similarity">
    <text evidence="1">Belongs to the TrpA family.</text>
</comment>
<proteinExistence type="inferred from homology"/>
<name>TRPA_STRPJ</name>
<protein>
    <recommendedName>
        <fullName evidence="1">Tryptophan synthase alpha chain</fullName>
        <ecNumber evidence="1">4.2.1.20</ecNumber>
    </recommendedName>
</protein>
<evidence type="ECO:0000255" key="1">
    <source>
        <dbReference type="HAMAP-Rule" id="MF_00131"/>
    </source>
</evidence>
<dbReference type="EC" id="4.2.1.20" evidence="1"/>
<dbReference type="EMBL" id="FM211187">
    <property type="protein sequence ID" value="CAR69595.1"/>
    <property type="molecule type" value="Genomic_DNA"/>
</dbReference>
<dbReference type="RefSeq" id="WP_001126993.1">
    <property type="nucleotide sequence ID" value="NC_011900.1"/>
</dbReference>
<dbReference type="SMR" id="B8ZN58"/>
<dbReference type="KEGG" id="sne:SPN23F18310"/>
<dbReference type="HOGENOM" id="CLU_016734_0_0_9"/>
<dbReference type="UniPathway" id="UPA00035">
    <property type="reaction ID" value="UER00044"/>
</dbReference>
<dbReference type="GO" id="GO:0005829">
    <property type="term" value="C:cytosol"/>
    <property type="evidence" value="ECO:0007669"/>
    <property type="project" value="TreeGrafter"/>
</dbReference>
<dbReference type="GO" id="GO:0004834">
    <property type="term" value="F:tryptophan synthase activity"/>
    <property type="evidence" value="ECO:0007669"/>
    <property type="project" value="UniProtKB-UniRule"/>
</dbReference>
<dbReference type="CDD" id="cd04724">
    <property type="entry name" value="Tryptophan_synthase_alpha"/>
    <property type="match status" value="1"/>
</dbReference>
<dbReference type="Gene3D" id="3.20.20.70">
    <property type="entry name" value="Aldolase class I"/>
    <property type="match status" value="1"/>
</dbReference>
<dbReference type="HAMAP" id="MF_00131">
    <property type="entry name" value="Trp_synth_alpha"/>
    <property type="match status" value="1"/>
</dbReference>
<dbReference type="InterPro" id="IPR013785">
    <property type="entry name" value="Aldolase_TIM"/>
</dbReference>
<dbReference type="InterPro" id="IPR011060">
    <property type="entry name" value="RibuloseP-bd_barrel"/>
</dbReference>
<dbReference type="InterPro" id="IPR018204">
    <property type="entry name" value="Trp_synthase_alpha_AS"/>
</dbReference>
<dbReference type="InterPro" id="IPR002028">
    <property type="entry name" value="Trp_synthase_suA"/>
</dbReference>
<dbReference type="NCBIfam" id="TIGR00262">
    <property type="entry name" value="trpA"/>
    <property type="match status" value="1"/>
</dbReference>
<dbReference type="PANTHER" id="PTHR43406:SF1">
    <property type="entry name" value="TRYPTOPHAN SYNTHASE ALPHA CHAIN, CHLOROPLASTIC"/>
    <property type="match status" value="1"/>
</dbReference>
<dbReference type="PANTHER" id="PTHR43406">
    <property type="entry name" value="TRYPTOPHAN SYNTHASE, ALPHA CHAIN"/>
    <property type="match status" value="1"/>
</dbReference>
<dbReference type="Pfam" id="PF00290">
    <property type="entry name" value="Trp_syntA"/>
    <property type="match status" value="1"/>
</dbReference>
<dbReference type="SUPFAM" id="SSF51366">
    <property type="entry name" value="Ribulose-phoshate binding barrel"/>
    <property type="match status" value="1"/>
</dbReference>
<dbReference type="PROSITE" id="PS00167">
    <property type="entry name" value="TRP_SYNTHASE_ALPHA"/>
    <property type="match status" value="1"/>
</dbReference>
<keyword id="KW-0028">Amino-acid biosynthesis</keyword>
<keyword id="KW-0057">Aromatic amino acid biosynthesis</keyword>
<keyword id="KW-0456">Lyase</keyword>
<keyword id="KW-0822">Tryptophan biosynthesis</keyword>